<dbReference type="EMBL" id="M63632">
    <property type="protein sequence ID" value="AAA49342.1"/>
    <property type="molecule type" value="mRNA"/>
</dbReference>
<dbReference type="PIR" id="JN0120">
    <property type="entry name" value="JN0120"/>
</dbReference>
<dbReference type="SMR" id="P22671"/>
<dbReference type="GlyCosmos" id="P22671">
    <property type="glycosylation" value="2 sites, No reported glycans"/>
</dbReference>
<dbReference type="GO" id="GO:0016020">
    <property type="term" value="C:membrane"/>
    <property type="evidence" value="ECO:0000250"/>
    <property type="project" value="UniProtKB"/>
</dbReference>
<dbReference type="GO" id="GO:0097381">
    <property type="term" value="C:photoreceptor disc membrane"/>
    <property type="evidence" value="ECO:0000250"/>
    <property type="project" value="UniProtKB"/>
</dbReference>
<dbReference type="GO" id="GO:0005886">
    <property type="term" value="C:plasma membrane"/>
    <property type="evidence" value="ECO:0000250"/>
    <property type="project" value="UniProtKB"/>
</dbReference>
<dbReference type="GO" id="GO:0005502">
    <property type="term" value="F:11-cis retinal binding"/>
    <property type="evidence" value="ECO:0000250"/>
    <property type="project" value="UniProtKB"/>
</dbReference>
<dbReference type="GO" id="GO:0008020">
    <property type="term" value="F:G protein-coupled photoreceptor activity"/>
    <property type="evidence" value="ECO:0000250"/>
    <property type="project" value="UniProtKB"/>
</dbReference>
<dbReference type="GO" id="GO:0016038">
    <property type="term" value="P:absorption of visible light"/>
    <property type="evidence" value="ECO:0000250"/>
    <property type="project" value="UniProtKB"/>
</dbReference>
<dbReference type="GO" id="GO:0016056">
    <property type="term" value="P:G protein-coupled opsin signaling pathway"/>
    <property type="evidence" value="ECO:0000250"/>
    <property type="project" value="UniProtKB"/>
</dbReference>
<dbReference type="GO" id="GO:0007601">
    <property type="term" value="P:visual perception"/>
    <property type="evidence" value="ECO:0007669"/>
    <property type="project" value="UniProtKB-KW"/>
</dbReference>
<dbReference type="CDD" id="cd15080">
    <property type="entry name" value="7tmA_MWS_opsin"/>
    <property type="match status" value="1"/>
</dbReference>
<dbReference type="FunFam" id="1.20.1070.10:FF:000018">
    <property type="entry name" value="Rhodopsin"/>
    <property type="match status" value="1"/>
</dbReference>
<dbReference type="Gene3D" id="1.20.1070.10">
    <property type="entry name" value="Rhodopsin 7-helix transmembrane proteins"/>
    <property type="match status" value="1"/>
</dbReference>
<dbReference type="InterPro" id="IPR050125">
    <property type="entry name" value="GPCR_opsins"/>
</dbReference>
<dbReference type="InterPro" id="IPR000276">
    <property type="entry name" value="GPCR_Rhodpsn"/>
</dbReference>
<dbReference type="InterPro" id="IPR017452">
    <property type="entry name" value="GPCR_Rhodpsn_7TM"/>
</dbReference>
<dbReference type="InterPro" id="IPR001760">
    <property type="entry name" value="Opsin"/>
</dbReference>
<dbReference type="InterPro" id="IPR027430">
    <property type="entry name" value="Retinal_BS"/>
</dbReference>
<dbReference type="InterPro" id="IPR000732">
    <property type="entry name" value="Rhodopsin"/>
</dbReference>
<dbReference type="InterPro" id="IPR019477">
    <property type="entry name" value="Rhodopsin_N"/>
</dbReference>
<dbReference type="PANTHER" id="PTHR24240">
    <property type="entry name" value="OPSIN"/>
    <property type="match status" value="1"/>
</dbReference>
<dbReference type="Pfam" id="PF00001">
    <property type="entry name" value="7tm_1"/>
    <property type="match status" value="1"/>
</dbReference>
<dbReference type="Pfam" id="PF10413">
    <property type="entry name" value="Rhodopsin_N"/>
    <property type="match status" value="1"/>
</dbReference>
<dbReference type="PRINTS" id="PR00237">
    <property type="entry name" value="GPCRRHODOPSN"/>
</dbReference>
<dbReference type="PRINTS" id="PR00238">
    <property type="entry name" value="OPSIN"/>
</dbReference>
<dbReference type="PRINTS" id="PR00579">
    <property type="entry name" value="RHODOPSIN"/>
</dbReference>
<dbReference type="SUPFAM" id="SSF81321">
    <property type="entry name" value="Family A G protein-coupled receptor-like"/>
    <property type="match status" value="1"/>
</dbReference>
<dbReference type="PROSITE" id="PS00237">
    <property type="entry name" value="G_PROTEIN_RECEP_F1_1"/>
    <property type="match status" value="1"/>
</dbReference>
<dbReference type="PROSITE" id="PS50262">
    <property type="entry name" value="G_PROTEIN_RECEP_F1_2"/>
    <property type="match status" value="1"/>
</dbReference>
<dbReference type="PROSITE" id="PS00238">
    <property type="entry name" value="OPSIN"/>
    <property type="match status" value="1"/>
</dbReference>
<evidence type="ECO:0000250" key="1">
    <source>
        <dbReference type="UniProtKB" id="P02699"/>
    </source>
</evidence>
<evidence type="ECO:0000250" key="2">
    <source>
        <dbReference type="UniProtKB" id="P08100"/>
    </source>
</evidence>
<evidence type="ECO:0000250" key="3">
    <source>
        <dbReference type="UniProtKB" id="P32309"/>
    </source>
</evidence>
<evidence type="ECO:0000250" key="4">
    <source>
        <dbReference type="UniProtKB" id="P35359"/>
    </source>
</evidence>
<evidence type="ECO:0000255" key="5"/>
<evidence type="ECO:0000255" key="6">
    <source>
        <dbReference type="PROSITE-ProRule" id="PRU00521"/>
    </source>
</evidence>
<evidence type="ECO:0000256" key="7">
    <source>
        <dbReference type="SAM" id="MobiDB-lite"/>
    </source>
</evidence>
<evidence type="ECO:0000269" key="8">
    <source>
    </source>
</evidence>
<evidence type="ECO:0000305" key="9"/>
<comment type="function">
    <text evidence="1 2 3">Photoreceptor required for image-forming vision at low light intensity. While most salt water fish species use retinal as chromophore, most freshwater fish use 3-dehydroretinal, or a mixture of retinal and 3-dehydroretinal (By similarity). Light-induced isomerization of 11-cis to all-trans retinal triggers a conformational change that activates signaling via G-proteins. Subsequent receptor phosphorylation mediates displacement of the bound G-protein alpha subunit by arrestin and terminates signaling (By similarity).</text>
</comment>
<comment type="subcellular location">
    <subcellularLocation>
        <location evidence="2">Membrane</location>
        <topology evidence="2">Multi-pass membrane protein</topology>
    </subcellularLocation>
    <subcellularLocation>
        <location evidence="4">Cell projection</location>
        <location evidence="4">Cilium</location>
        <location evidence="4">Photoreceptor outer segment</location>
    </subcellularLocation>
    <text evidence="2">Synthesized in the inner segment (IS) of rod photoreceptor cells before vectorial transport to disk membranes in the rod outer segment (OS) photosensory cilia.</text>
</comment>
<comment type="tissue specificity">
    <text evidence="8">Short photoreceptor cells.</text>
</comment>
<comment type="PTM">
    <text evidence="1">Phosphorylated on some or all of the serine and threonine residues present in the C-terminal region.</text>
</comment>
<comment type="PTM">
    <text evidence="1">Contains one covalently linked retinal chromophore.</text>
</comment>
<comment type="similarity">
    <text evidence="6">Belongs to the G-protein coupled receptor 1 family. Opsin subfamily.</text>
</comment>
<feature type="chain" id="PRO_0000197730" description="Rhodopsin">
    <location>
        <begin position="1"/>
        <end position="353"/>
    </location>
</feature>
<feature type="topological domain" description="Extracellular" evidence="9">
    <location>
        <begin position="1"/>
        <end position="36"/>
    </location>
</feature>
<feature type="transmembrane region" description="Helical; Name=1" evidence="1">
    <location>
        <begin position="37"/>
        <end position="61"/>
    </location>
</feature>
<feature type="topological domain" description="Cytoplasmic" evidence="9">
    <location>
        <begin position="62"/>
        <end position="73"/>
    </location>
</feature>
<feature type="transmembrane region" description="Helical; Name=2" evidence="1">
    <location>
        <begin position="74"/>
        <end position="96"/>
    </location>
</feature>
<feature type="topological domain" description="Extracellular" evidence="9">
    <location>
        <begin position="97"/>
        <end position="110"/>
    </location>
</feature>
<feature type="transmembrane region" description="Helical; Name=3" evidence="1">
    <location>
        <begin position="111"/>
        <end position="133"/>
    </location>
</feature>
<feature type="topological domain" description="Cytoplasmic" evidence="9">
    <location>
        <begin position="134"/>
        <end position="152"/>
    </location>
</feature>
<feature type="transmembrane region" description="Helical; Name=4" evidence="1">
    <location>
        <begin position="153"/>
        <end position="173"/>
    </location>
</feature>
<feature type="topological domain" description="Extracellular" evidence="9">
    <location>
        <begin position="174"/>
        <end position="202"/>
    </location>
</feature>
<feature type="transmembrane region" description="Helical; Name=5" evidence="1">
    <location>
        <begin position="203"/>
        <end position="224"/>
    </location>
</feature>
<feature type="topological domain" description="Cytoplasmic" evidence="9">
    <location>
        <begin position="225"/>
        <end position="252"/>
    </location>
</feature>
<feature type="transmembrane region" description="Helical; Name=6" evidence="1">
    <location>
        <begin position="253"/>
        <end position="274"/>
    </location>
</feature>
<feature type="topological domain" description="Extracellular" evidence="9">
    <location>
        <begin position="275"/>
        <end position="286"/>
    </location>
</feature>
<feature type="transmembrane region" description="Helical; Name=7" evidence="1">
    <location>
        <begin position="287"/>
        <end position="308"/>
    </location>
</feature>
<feature type="topological domain" description="Cytoplasmic" evidence="9">
    <location>
        <begin position="309"/>
        <end position="353"/>
    </location>
</feature>
<feature type="region of interest" description="Disordered" evidence="7">
    <location>
        <begin position="330"/>
        <end position="353"/>
    </location>
</feature>
<feature type="short sequence motif" description="'Ionic lock' involved in activated form stabilization" evidence="1">
    <location>
        <begin position="134"/>
        <end position="136"/>
    </location>
</feature>
<feature type="compositionally biased region" description="Low complexity" evidence="7">
    <location>
        <begin position="336"/>
        <end position="353"/>
    </location>
</feature>
<feature type="site" description="Plays an important role in the conformation switch to the active conformation" evidence="1">
    <location>
        <position position="113"/>
    </location>
</feature>
<feature type="modified residue" description="N6-(retinylidene)lysine" evidence="1">
    <location>
        <position position="296"/>
    </location>
</feature>
<feature type="glycosylation site" description="N-linked (GlcNAc...) asparagine" evidence="5">
    <location>
        <position position="2"/>
    </location>
</feature>
<feature type="glycosylation site" description="N-linked (GlcNAc...) asparagine" evidence="5">
    <location>
        <position position="15"/>
    </location>
</feature>
<feature type="disulfide bond" evidence="6">
    <location>
        <begin position="110"/>
        <end position="187"/>
    </location>
</feature>
<protein>
    <recommendedName>
        <fullName>Rhodopsin</fullName>
    </recommendedName>
</protein>
<sequence length="353" mass="39408">MNGTEGDNFYVPFSNKTGLARSPYEYPQYYLAEPWKYSALAAYMFFLILVGFPVNFLTLFVTVQHKKLRTPLNYILLNLAMANLFMVLFGFTVTMYTSMNGYFVFGPTMCSIEGFFATLGGEVALWSLVVLAIERYIVICKPMGNFRFGNTHAIMGVAFTWIMALACAAPPLVGWSRYIPEGMQCSCGPDYYTLNPNFNNESYVVYMFVVHFLVPFVIIFFCYGRLLCTVKEAAAAQQESASTQKAEKEVTRMVVLMVIGFLVCWVPYASVAFYIFTHQGSDFGATFMTLPAFFAKSSALYNPVIYILMNKQFRNCMITTLCCGKNPLGDDESGASTSKTEVSSVSTSPVSPA</sequence>
<name>OPSD_LETCA</name>
<accession>P22671</accession>
<reference key="1">
    <citation type="journal article" date="1991" name="Biochem. Biophys. Res. Commun.">
        <title>Isolation and characterization of lamprey rhodopsin cDNA.</title>
        <authorList>
            <person name="Hisatomi O."/>
            <person name="Iwasa T."/>
            <person name="Tokunaga F."/>
            <person name="Yasui A."/>
        </authorList>
    </citation>
    <scope>NUCLEOTIDE SEQUENCE [MRNA]</scope>
    <scope>TISSUE SPECIFICITY</scope>
    <source>
        <tissue>Liver</tissue>
    </source>
</reference>
<gene>
    <name type="primary">RHO</name>
</gene>
<keyword id="KW-0966">Cell projection</keyword>
<keyword id="KW-0157">Chromophore</keyword>
<keyword id="KW-1015">Disulfide bond</keyword>
<keyword id="KW-0297">G-protein coupled receptor</keyword>
<keyword id="KW-0325">Glycoprotein</keyword>
<keyword id="KW-0449">Lipoprotein</keyword>
<keyword id="KW-0472">Membrane</keyword>
<keyword id="KW-0564">Palmitate</keyword>
<keyword id="KW-0597">Phosphoprotein</keyword>
<keyword id="KW-0600">Photoreceptor protein</keyword>
<keyword id="KW-0675">Receptor</keyword>
<keyword id="KW-0681">Retinal protein</keyword>
<keyword id="KW-0716">Sensory transduction</keyword>
<keyword id="KW-0807">Transducer</keyword>
<keyword id="KW-0812">Transmembrane</keyword>
<keyword id="KW-1133">Transmembrane helix</keyword>
<keyword id="KW-0844">Vision</keyword>
<organism>
    <name type="scientific">Lethenteron camtschaticum</name>
    <name type="common">Japanese lamprey</name>
    <name type="synonym">Lampetra japonica</name>
    <dbReference type="NCBI Taxonomy" id="980415"/>
    <lineage>
        <taxon>Eukaryota</taxon>
        <taxon>Metazoa</taxon>
        <taxon>Chordata</taxon>
        <taxon>Craniata</taxon>
        <taxon>Vertebrata</taxon>
        <taxon>Cyclostomata</taxon>
        <taxon>Hyperoartia</taxon>
        <taxon>Petromyzontiformes</taxon>
        <taxon>Petromyzontidae</taxon>
        <taxon>Lethenteron</taxon>
    </lineage>
</organism>
<proteinExistence type="evidence at transcript level"/>